<name>RL4_BART1</name>
<sequence length="206" mass="22900">MDLVIKTLDGHEAGKLKVSESIFDLVPREDILQRVVRWQLARRQQGTHQSQGRSDVSRTGAKMFKQKGTGRARHSSARAPQFRGGGKAHGPVFRSHAHDLPKKIRALGLRLALSAKLKAKDLIVVDELAVKDAKTKKLVSHFSKLGFNNALLIGGQEIDINFFRAASNIPNIDVLPIQGINVYDILRRSKLVLSKAAVEALEERFR</sequence>
<evidence type="ECO:0000255" key="1">
    <source>
        <dbReference type="HAMAP-Rule" id="MF_01328"/>
    </source>
</evidence>
<evidence type="ECO:0000256" key="2">
    <source>
        <dbReference type="SAM" id="MobiDB-lite"/>
    </source>
</evidence>
<evidence type="ECO:0000305" key="3"/>
<organism>
    <name type="scientific">Bartonella tribocorum (strain CIP 105476 / IBS 506)</name>
    <dbReference type="NCBI Taxonomy" id="382640"/>
    <lineage>
        <taxon>Bacteria</taxon>
        <taxon>Pseudomonadati</taxon>
        <taxon>Pseudomonadota</taxon>
        <taxon>Alphaproteobacteria</taxon>
        <taxon>Hyphomicrobiales</taxon>
        <taxon>Bartonellaceae</taxon>
        <taxon>Bartonella</taxon>
    </lineage>
</organism>
<feature type="chain" id="PRO_1000086508" description="Large ribosomal subunit protein uL4">
    <location>
        <begin position="1"/>
        <end position="206"/>
    </location>
</feature>
<feature type="region of interest" description="Disordered" evidence="2">
    <location>
        <begin position="42"/>
        <end position="94"/>
    </location>
</feature>
<feature type="compositionally biased region" description="Polar residues" evidence="2">
    <location>
        <begin position="42"/>
        <end position="54"/>
    </location>
</feature>
<feature type="compositionally biased region" description="Basic residues" evidence="2">
    <location>
        <begin position="64"/>
        <end position="76"/>
    </location>
</feature>
<accession>A9IW26</accession>
<reference key="1">
    <citation type="journal article" date="2007" name="Nat. Genet.">
        <title>Genomic analysis of Bartonella identifies type IV secretion systems as host adaptability factors.</title>
        <authorList>
            <person name="Saenz H.L."/>
            <person name="Engel P."/>
            <person name="Stoeckli M.C."/>
            <person name="Lanz C."/>
            <person name="Raddatz G."/>
            <person name="Vayssier-Taussat M."/>
            <person name="Birtles R."/>
            <person name="Schuster S.C."/>
            <person name="Dehio C."/>
        </authorList>
    </citation>
    <scope>NUCLEOTIDE SEQUENCE [LARGE SCALE GENOMIC DNA]</scope>
    <source>
        <strain>CIP 105476 / IBS 506</strain>
    </source>
</reference>
<dbReference type="EMBL" id="AM260525">
    <property type="protein sequence ID" value="CAK01863.1"/>
    <property type="molecule type" value="Genomic_DNA"/>
</dbReference>
<dbReference type="RefSeq" id="WP_012231996.1">
    <property type="nucleotide sequence ID" value="NC_010161.1"/>
</dbReference>
<dbReference type="SMR" id="A9IW26"/>
<dbReference type="KEGG" id="btr:BT_1517"/>
<dbReference type="eggNOG" id="COG0088">
    <property type="taxonomic scope" value="Bacteria"/>
</dbReference>
<dbReference type="HOGENOM" id="CLU_041575_5_1_5"/>
<dbReference type="Proteomes" id="UP000001592">
    <property type="component" value="Chromosome"/>
</dbReference>
<dbReference type="GO" id="GO:1990904">
    <property type="term" value="C:ribonucleoprotein complex"/>
    <property type="evidence" value="ECO:0007669"/>
    <property type="project" value="UniProtKB-KW"/>
</dbReference>
<dbReference type="GO" id="GO:0005840">
    <property type="term" value="C:ribosome"/>
    <property type="evidence" value="ECO:0007669"/>
    <property type="project" value="UniProtKB-KW"/>
</dbReference>
<dbReference type="GO" id="GO:0019843">
    <property type="term" value="F:rRNA binding"/>
    <property type="evidence" value="ECO:0007669"/>
    <property type="project" value="UniProtKB-UniRule"/>
</dbReference>
<dbReference type="GO" id="GO:0003735">
    <property type="term" value="F:structural constituent of ribosome"/>
    <property type="evidence" value="ECO:0007669"/>
    <property type="project" value="InterPro"/>
</dbReference>
<dbReference type="GO" id="GO:0006412">
    <property type="term" value="P:translation"/>
    <property type="evidence" value="ECO:0007669"/>
    <property type="project" value="UniProtKB-UniRule"/>
</dbReference>
<dbReference type="Gene3D" id="3.40.1370.10">
    <property type="match status" value="1"/>
</dbReference>
<dbReference type="HAMAP" id="MF_01328_B">
    <property type="entry name" value="Ribosomal_uL4_B"/>
    <property type="match status" value="1"/>
</dbReference>
<dbReference type="InterPro" id="IPR002136">
    <property type="entry name" value="Ribosomal_uL4"/>
</dbReference>
<dbReference type="InterPro" id="IPR013005">
    <property type="entry name" value="Ribosomal_uL4-like"/>
</dbReference>
<dbReference type="InterPro" id="IPR023574">
    <property type="entry name" value="Ribosomal_uL4_dom_sf"/>
</dbReference>
<dbReference type="NCBIfam" id="TIGR03953">
    <property type="entry name" value="rplD_bact"/>
    <property type="match status" value="1"/>
</dbReference>
<dbReference type="PANTHER" id="PTHR10746">
    <property type="entry name" value="50S RIBOSOMAL PROTEIN L4"/>
    <property type="match status" value="1"/>
</dbReference>
<dbReference type="PANTHER" id="PTHR10746:SF6">
    <property type="entry name" value="LARGE RIBOSOMAL SUBUNIT PROTEIN UL4M"/>
    <property type="match status" value="1"/>
</dbReference>
<dbReference type="Pfam" id="PF00573">
    <property type="entry name" value="Ribosomal_L4"/>
    <property type="match status" value="1"/>
</dbReference>
<dbReference type="SUPFAM" id="SSF52166">
    <property type="entry name" value="Ribosomal protein L4"/>
    <property type="match status" value="1"/>
</dbReference>
<gene>
    <name evidence="1" type="primary">rplD</name>
    <name type="ordered locus">BT_1517</name>
</gene>
<proteinExistence type="inferred from homology"/>
<protein>
    <recommendedName>
        <fullName evidence="1">Large ribosomal subunit protein uL4</fullName>
    </recommendedName>
    <alternativeName>
        <fullName evidence="3">50S ribosomal protein L4</fullName>
    </alternativeName>
</protein>
<keyword id="KW-0687">Ribonucleoprotein</keyword>
<keyword id="KW-0689">Ribosomal protein</keyword>
<keyword id="KW-0694">RNA-binding</keyword>
<keyword id="KW-0699">rRNA-binding</keyword>
<comment type="function">
    <text evidence="1">One of the primary rRNA binding proteins, this protein initially binds near the 5'-end of the 23S rRNA. It is important during the early stages of 50S assembly. It makes multiple contacts with different domains of the 23S rRNA in the assembled 50S subunit and ribosome.</text>
</comment>
<comment type="function">
    <text evidence="1">Forms part of the polypeptide exit tunnel.</text>
</comment>
<comment type="subunit">
    <text evidence="1">Part of the 50S ribosomal subunit.</text>
</comment>
<comment type="similarity">
    <text evidence="1">Belongs to the universal ribosomal protein uL4 family.</text>
</comment>